<keyword id="KW-1003">Cell membrane</keyword>
<keyword id="KW-0846">Cobalamin</keyword>
<keyword id="KW-0170">Cobalt</keyword>
<keyword id="KW-0968">Cytoplasmic vesicle</keyword>
<keyword id="KW-0217">Developmental protein</keyword>
<keyword id="KW-0254">Endocytosis</keyword>
<keyword id="KW-0256">Endoplasmic reticulum</keyword>
<keyword id="KW-0306">Gastrulation</keyword>
<keyword id="KW-0325">Glycoprotein</keyword>
<keyword id="KW-0458">Lysosome</keyword>
<keyword id="KW-0472">Membrane</keyword>
<keyword id="KW-0597">Phosphoprotein</keyword>
<keyword id="KW-1185">Reference proteome</keyword>
<keyword id="KW-0812">Transmembrane</keyword>
<keyword id="KW-1133">Transmembrane helix</keyword>
<keyword id="KW-0813">Transport</keyword>
<protein>
    <recommendedName>
        <fullName evidence="2">Lysosomal cobalamin transport escort protein LMBD1</fullName>
        <shortName>LMBD1</shortName>
    </recommendedName>
    <alternativeName>
        <fullName>LMBR1 domain-containing protein 1</fullName>
    </alternativeName>
</protein>
<proteinExistence type="evidence at protein level"/>
<dbReference type="EMBL" id="AY093598">
    <property type="protein sequence ID" value="AAM18793.1"/>
    <property type="molecule type" value="mRNA"/>
</dbReference>
<dbReference type="EMBL" id="BC078723">
    <property type="protein sequence ID" value="AAH78723.1"/>
    <property type="molecule type" value="mRNA"/>
</dbReference>
<dbReference type="RefSeq" id="NP_631928.2">
    <property type="nucleotide sequence ID" value="NM_139189.2"/>
</dbReference>
<dbReference type="SMR" id="Q6AZ61"/>
<dbReference type="FunCoup" id="Q6AZ61">
    <property type="interactions" value="1593"/>
</dbReference>
<dbReference type="STRING" id="10116.ENSRNOP00000016887"/>
<dbReference type="GlyCosmos" id="Q6AZ61">
    <property type="glycosylation" value="7 sites, No reported glycans"/>
</dbReference>
<dbReference type="GlyGen" id="Q6AZ61">
    <property type="glycosylation" value="7 sites"/>
</dbReference>
<dbReference type="iPTMnet" id="Q6AZ61"/>
<dbReference type="PhosphoSitePlus" id="Q6AZ61"/>
<dbReference type="jPOST" id="Q6AZ61"/>
<dbReference type="PaxDb" id="10116-ENSRNOP00000016887"/>
<dbReference type="Ensembl" id="ENSRNOT00000016887.6">
    <property type="protein sequence ID" value="ENSRNOP00000016887.5"/>
    <property type="gene ID" value="ENSRNOG00000012178.6"/>
</dbReference>
<dbReference type="GeneID" id="246046"/>
<dbReference type="KEGG" id="rno:246046"/>
<dbReference type="UCSC" id="RGD:708471">
    <property type="organism name" value="rat"/>
</dbReference>
<dbReference type="AGR" id="RGD:708471"/>
<dbReference type="CTD" id="55788"/>
<dbReference type="RGD" id="708471">
    <property type="gene designation" value="Lmbrd1"/>
</dbReference>
<dbReference type="eggNOG" id="ENOG502QQ2T">
    <property type="taxonomic scope" value="Eukaryota"/>
</dbReference>
<dbReference type="GeneTree" id="ENSGT00390000002581"/>
<dbReference type="HOGENOM" id="CLU_028341_1_0_1"/>
<dbReference type="InParanoid" id="Q6AZ61"/>
<dbReference type="OMA" id="FWAQFVF"/>
<dbReference type="OrthoDB" id="73273at2759"/>
<dbReference type="PhylomeDB" id="Q6AZ61"/>
<dbReference type="PRO" id="PR:Q6AZ61"/>
<dbReference type="Proteomes" id="UP000002494">
    <property type="component" value="Chromosome 9"/>
</dbReference>
<dbReference type="Bgee" id="ENSRNOG00000012178">
    <property type="expression patterns" value="Expressed in Ammon's horn and 20 other cell types or tissues"/>
</dbReference>
<dbReference type="GO" id="GO:0045334">
    <property type="term" value="C:clathrin-coated endocytic vesicle"/>
    <property type="evidence" value="ECO:0000250"/>
    <property type="project" value="UniProtKB"/>
</dbReference>
<dbReference type="GO" id="GO:0030136">
    <property type="term" value="C:clathrin-coated vesicle"/>
    <property type="evidence" value="ECO:0000250"/>
    <property type="project" value="UniProtKB"/>
</dbReference>
<dbReference type="GO" id="GO:0005789">
    <property type="term" value="C:endoplasmic reticulum membrane"/>
    <property type="evidence" value="ECO:0000250"/>
    <property type="project" value="UniProtKB"/>
</dbReference>
<dbReference type="GO" id="GO:0005765">
    <property type="term" value="C:lysosomal membrane"/>
    <property type="evidence" value="ECO:0000250"/>
    <property type="project" value="UniProtKB"/>
</dbReference>
<dbReference type="GO" id="GO:0005764">
    <property type="term" value="C:lysosome"/>
    <property type="evidence" value="ECO:0000266"/>
    <property type="project" value="RGD"/>
</dbReference>
<dbReference type="GO" id="GO:0005886">
    <property type="term" value="C:plasma membrane"/>
    <property type="evidence" value="ECO:0000250"/>
    <property type="project" value="UniProtKB"/>
</dbReference>
<dbReference type="GO" id="GO:0035612">
    <property type="term" value="F:AP-2 adaptor complex binding"/>
    <property type="evidence" value="ECO:0000250"/>
    <property type="project" value="UniProtKB"/>
</dbReference>
<dbReference type="GO" id="GO:0032050">
    <property type="term" value="F:clathrin heavy chain binding"/>
    <property type="evidence" value="ECO:0000250"/>
    <property type="project" value="UniProtKB"/>
</dbReference>
<dbReference type="GO" id="GO:0031419">
    <property type="term" value="F:cobalamin binding"/>
    <property type="evidence" value="ECO:0007669"/>
    <property type="project" value="UniProtKB-KW"/>
</dbReference>
<dbReference type="GO" id="GO:0005158">
    <property type="term" value="F:insulin receptor binding"/>
    <property type="evidence" value="ECO:0000266"/>
    <property type="project" value="RGD"/>
</dbReference>
<dbReference type="GO" id="GO:0140318">
    <property type="term" value="F:protein transporter activity"/>
    <property type="evidence" value="ECO:0000266"/>
    <property type="project" value="RGD"/>
</dbReference>
<dbReference type="GO" id="GO:0072583">
    <property type="term" value="P:clathrin-dependent endocytosis"/>
    <property type="evidence" value="ECO:0000250"/>
    <property type="project" value="UniProtKB"/>
</dbReference>
<dbReference type="GO" id="GO:0007369">
    <property type="term" value="P:gastrulation"/>
    <property type="evidence" value="ECO:0000250"/>
    <property type="project" value="UniProtKB"/>
</dbReference>
<dbReference type="GO" id="GO:0038016">
    <property type="term" value="P:insulin receptor internalization"/>
    <property type="evidence" value="ECO:0000250"/>
    <property type="project" value="UniProtKB"/>
</dbReference>
<dbReference type="GO" id="GO:0061462">
    <property type="term" value="P:protein localization to lysosome"/>
    <property type="evidence" value="ECO:0000250"/>
    <property type="project" value="UniProtKB"/>
</dbReference>
<dbReference type="InterPro" id="IPR050854">
    <property type="entry name" value="LMBD1_LysCbl_Transport"/>
</dbReference>
<dbReference type="InterPro" id="IPR006876">
    <property type="entry name" value="LMBR1-like_membr_prot"/>
</dbReference>
<dbReference type="PANTHER" id="PTHR16130:SF2">
    <property type="entry name" value="LYSOSOMAL COBALAMIN TRANSPORT ESCORT PROTEIN LMBD1"/>
    <property type="match status" value="1"/>
</dbReference>
<dbReference type="PANTHER" id="PTHR16130">
    <property type="entry name" value="LYSOSOMAL COBALAMIN TRANSPORTER-RELATED"/>
    <property type="match status" value="1"/>
</dbReference>
<dbReference type="Pfam" id="PF04791">
    <property type="entry name" value="LMBR1"/>
    <property type="match status" value="1"/>
</dbReference>
<accession>Q6AZ61</accession>
<accession>Q8R3Z8</accession>
<gene>
    <name type="primary">Lmbrd1</name>
</gene>
<reference key="1">
    <citation type="submission" date="2002-03" db="EMBL/GenBank/DDBJ databases">
        <title>Cloning and analysis of p53-related gene from cDNA library following short interval successive partial hepatectomy in rat liver regeneration.</title>
        <authorList>
            <person name="Lee Y."/>
            <person name="Xu C."/>
            <person name="Lee W."/>
        </authorList>
    </citation>
    <scope>NUCLEOTIDE SEQUENCE [MRNA]</scope>
</reference>
<reference key="2">
    <citation type="journal article" date="2004" name="Genome Res.">
        <title>The status, quality, and expansion of the NIH full-length cDNA project: the Mammalian Gene Collection (MGC).</title>
        <authorList>
            <consortium name="The MGC Project Team"/>
        </authorList>
    </citation>
    <scope>NUCLEOTIDE SEQUENCE [LARGE SCALE MRNA]</scope>
    <source>
        <tissue>Lung</tissue>
    </source>
</reference>
<reference key="3">
    <citation type="journal article" date="2012" name="Nat. Commun.">
        <title>Quantitative maps of protein phosphorylation sites across 14 different rat organs and tissues.</title>
        <authorList>
            <person name="Lundby A."/>
            <person name="Secher A."/>
            <person name="Lage K."/>
            <person name="Nordsborg N.B."/>
            <person name="Dmytriyev A."/>
            <person name="Lundby C."/>
            <person name="Olsen J.V."/>
        </authorList>
    </citation>
    <scope>PHOSPHORYLATION [LARGE SCALE ANALYSIS] AT SER-525 AND SER-528</scope>
    <scope>IDENTIFICATION BY MASS SPECTROMETRY [LARGE SCALE ANALYSIS]</scope>
</reference>
<sequence>MAAAAADLVIGWCIFGLLLLAILAFCWVYVRKYQSQRESEVVSTVTAIFSLAVALITSALLPVDIFLVSYMKNQNGTFKDWANANVTVQIENTVLYGYYTLYSVILFCVFFWIPFVYFYYEEKDDDDTSKCTQVKTALKYTLGFVVICALLLLVGAFVPLNLPNNNNSTEWEKVKLLFEDLGTGQGLAALSFSISSLTLIGMLAAITYTAYGMSALPLNLIKGTRSTAYERLENTEDIEEVEQHIQTIRSKSKDGRPLSARDRRTLKQCEERLRTLRKRERHLEFIENSWWTKFCGALRPLKIIWGIFFILVALLFVISLFLSNLDKALHSAGIDSGFIVFGTNLSNPLNMLLPLLQTVFPLDYILITIIIMYFIFTSMAGIRNIGIWFFWIRLYKIRRGRTRPQALLFLCMILLLIVLHTSYMIYSLAPQYVMYGSQNYLIESNITSDAHKGNSTLAVPKRCDADAPKDQCTVTRTYVFLHKFWFFSAAYYFGNWAFLVVFLIGLIVSCCKGKKSVIEGVDEDSDLSDDEPSAYSA</sequence>
<name>LMBD1_RAT</name>
<organism>
    <name type="scientific">Rattus norvegicus</name>
    <name type="common">Rat</name>
    <dbReference type="NCBI Taxonomy" id="10116"/>
    <lineage>
        <taxon>Eukaryota</taxon>
        <taxon>Metazoa</taxon>
        <taxon>Chordata</taxon>
        <taxon>Craniata</taxon>
        <taxon>Vertebrata</taxon>
        <taxon>Euteleostomi</taxon>
        <taxon>Mammalia</taxon>
        <taxon>Eutheria</taxon>
        <taxon>Euarchontoglires</taxon>
        <taxon>Glires</taxon>
        <taxon>Rodentia</taxon>
        <taxon>Myomorpha</taxon>
        <taxon>Muroidea</taxon>
        <taxon>Muridae</taxon>
        <taxon>Murinae</taxon>
        <taxon>Rattus</taxon>
    </lineage>
</organism>
<feature type="chain" id="PRO_0000260518" description="Lysosomal cobalamin transport escort protein LMBD1">
    <location>
        <begin position="1"/>
        <end position="537"/>
    </location>
</feature>
<feature type="topological domain" description="Extracellular" evidence="3">
    <location>
        <begin position="1"/>
        <end position="7"/>
    </location>
</feature>
<feature type="transmembrane region" description="Helical; Name=1" evidence="3">
    <location>
        <begin position="8"/>
        <end position="28"/>
    </location>
</feature>
<feature type="topological domain" description="Cytoplasmic" evidence="3">
    <location>
        <begin position="29"/>
        <end position="47"/>
    </location>
</feature>
<feature type="transmembrane region" description="Helical; Name=2" evidence="3">
    <location>
        <begin position="48"/>
        <end position="68"/>
    </location>
</feature>
<feature type="topological domain" description="Extracellular" evidence="3">
    <location>
        <begin position="69"/>
        <end position="97"/>
    </location>
</feature>
<feature type="transmembrane region" description="Helical; Name=3" evidence="3">
    <location>
        <begin position="98"/>
        <end position="118"/>
    </location>
</feature>
<feature type="topological domain" description="Cytoplasmic" evidence="3">
    <location>
        <begin position="119"/>
        <end position="141"/>
    </location>
</feature>
<feature type="transmembrane region" description="Helical; Name=4" evidence="3">
    <location>
        <begin position="142"/>
        <end position="162"/>
    </location>
</feature>
<feature type="topological domain" description="Extracellular" evidence="3">
    <location>
        <begin position="163"/>
        <end position="185"/>
    </location>
</feature>
<feature type="transmembrane region" description="Helical; Name=5" evidence="3">
    <location>
        <begin position="186"/>
        <end position="206"/>
    </location>
</feature>
<feature type="topological domain" description="Cytoplasmic" evidence="3">
    <location>
        <begin position="207"/>
        <end position="302"/>
    </location>
</feature>
<feature type="transmembrane region" description="Helical; Name=6" evidence="3">
    <location>
        <begin position="303"/>
        <end position="323"/>
    </location>
</feature>
<feature type="topological domain" description="Extracellular" evidence="3">
    <location>
        <begin position="324"/>
        <end position="361"/>
    </location>
</feature>
<feature type="transmembrane region" description="Helical; Name=7" evidence="3">
    <location>
        <begin position="362"/>
        <end position="382"/>
    </location>
</feature>
<feature type="topological domain" description="Cytoplasmic" evidence="3">
    <location>
        <begin position="383"/>
        <end position="405"/>
    </location>
</feature>
<feature type="transmembrane region" description="Helical; Name=8" evidence="3">
    <location>
        <begin position="406"/>
        <end position="426"/>
    </location>
</feature>
<feature type="topological domain" description="Extracellular" evidence="3">
    <location>
        <begin position="427"/>
        <end position="483"/>
    </location>
</feature>
<feature type="transmembrane region" description="Helical; Name=9" evidence="3">
    <location>
        <begin position="484"/>
        <end position="504"/>
    </location>
</feature>
<feature type="topological domain" description="Cytoplasmic" evidence="3">
    <location>
        <begin position="505"/>
        <end position="537"/>
    </location>
</feature>
<feature type="short sequence motif" description="YERL motif; mediates interaction with adapter protein complex 2 and is essential for its function in clathrin-mediated endocytosis of INSR" evidence="1">
    <location>
        <begin position="229"/>
        <end position="232"/>
    </location>
</feature>
<feature type="short sequence motif" description="WTKF motif; mediates interaction with adapter protein complex 2 and is essential for its function in clathrin-mediated endocytosis of INSR" evidence="1">
    <location>
        <begin position="291"/>
        <end position="294"/>
    </location>
</feature>
<feature type="modified residue" description="Phosphothreonine" evidence="1">
    <location>
        <position position="235"/>
    </location>
</feature>
<feature type="modified residue" description="Phosphoserine" evidence="5">
    <location>
        <position position="525"/>
    </location>
</feature>
<feature type="modified residue" description="Phosphoserine" evidence="5">
    <location>
        <position position="528"/>
    </location>
</feature>
<feature type="glycosylation site" description="N-linked (GlcNAc...) asparagine" evidence="3">
    <location>
        <position position="75"/>
    </location>
</feature>
<feature type="glycosylation site" description="N-linked (GlcNAc...) asparagine" evidence="3">
    <location>
        <position position="85"/>
    </location>
</feature>
<feature type="glycosylation site" description="N-linked (GlcNAc...) asparagine" evidence="3">
    <location>
        <position position="166"/>
    </location>
</feature>
<feature type="glycosylation site" description="N-linked (GlcNAc...) asparagine" evidence="3">
    <location>
        <position position="167"/>
    </location>
</feature>
<feature type="glycosylation site" description="N-linked (GlcNAc...) asparagine" evidence="3">
    <location>
        <position position="344"/>
    </location>
</feature>
<feature type="glycosylation site" description="N-linked (GlcNAc...) asparagine" evidence="3">
    <location>
        <position position="445"/>
    </location>
</feature>
<feature type="glycosylation site" description="N-linked (GlcNAc...) asparagine" evidence="3">
    <location>
        <position position="454"/>
    </location>
</feature>
<feature type="sequence conflict" description="In Ref. 1; AAM18793." evidence="4" ref="1">
    <original>T</original>
    <variation>A</variation>
    <location>
        <position position="132"/>
    </location>
</feature>
<feature type="sequence conflict" description="In Ref. 1; AAM18793." evidence="4" ref="1">
    <original>I</original>
    <variation>T</variation>
    <location>
        <position position="387"/>
    </location>
</feature>
<evidence type="ECO:0000250" key="1">
    <source>
        <dbReference type="UniProtKB" id="Q8K0B2"/>
    </source>
</evidence>
<evidence type="ECO:0000250" key="2">
    <source>
        <dbReference type="UniProtKB" id="Q9NUN5"/>
    </source>
</evidence>
<evidence type="ECO:0000255" key="3"/>
<evidence type="ECO:0000305" key="4"/>
<evidence type="ECO:0007744" key="5">
    <source>
    </source>
</evidence>
<comment type="function">
    <text evidence="1 2">Lysosomal membrane chaperone required to export cobalamin (vitamin B12) from the lysosome to the cytosol, allowing its conversion to cofactors. Targets ABCD4 transporter from the endoplasmic reticulum to the lysosome. Then forms a complex with lysosomal ABCD4 and cytoplasmic MMACHC to transport cobalamin across the lysosomal membrane (By similarity). Acts as an adapter protein which plays an important role in mediating and regulating the internalization of the insulin receptor (INSR) (By similarity). Involved in clathrin-mediated endocytosis of INSR via its interaction with adapter protein complex 2 (By similarity). Essential for the initiation of gastrulation and early formation of mesoderm structures during embryogenesis (By similarity).</text>
</comment>
<comment type="subunit">
    <text evidence="1 2">Interacts with ABCD4; this interaction induces the translocation of ABCD4 from the endoplasmic reticulum to the lysosome. Interacts with ABCD4 and MMACHC; this interaction ensures the transport of cobalamin from the lysosome to the cytoplasm (By similarity). Interacts with INSR, adapter protein complex 2 and clathrin heavy chain (By similarity).</text>
</comment>
<comment type="subcellular location">
    <subcellularLocation>
        <location evidence="2">Endoplasmic reticulum membrane</location>
    </subcellularLocation>
    <subcellularLocation>
        <location evidence="2">Lysosome membrane</location>
        <topology evidence="3">Multi-pass membrane protein</topology>
    </subcellularLocation>
    <subcellularLocation>
        <location evidence="1">Cell membrane</location>
        <topology evidence="3">Multi-pass membrane protein</topology>
    </subcellularLocation>
    <subcellularLocation>
        <location evidence="1">Cytoplasmic vesicle</location>
        <location evidence="1">Clathrin-coated vesicle</location>
    </subcellularLocation>
</comment>
<comment type="PTM">
    <text evidence="2">N-glycosylated.</text>
</comment>
<comment type="similarity">
    <text evidence="4">Belongs to the LIMR family. LMBRD1 subfamily.</text>
</comment>